<dbReference type="EC" id="2.1.1.172" evidence="1"/>
<dbReference type="EMBL" id="AM286690">
    <property type="protein sequence ID" value="CAL17034.1"/>
    <property type="molecule type" value="Genomic_DNA"/>
</dbReference>
<dbReference type="RefSeq" id="WP_011588867.1">
    <property type="nucleotide sequence ID" value="NC_008260.1"/>
</dbReference>
<dbReference type="SMR" id="Q0VP64"/>
<dbReference type="STRING" id="393595.ABO_1586"/>
<dbReference type="KEGG" id="abo:ABO_1586"/>
<dbReference type="eggNOG" id="COG2813">
    <property type="taxonomic scope" value="Bacteria"/>
</dbReference>
<dbReference type="HOGENOM" id="CLU_049581_0_0_6"/>
<dbReference type="OrthoDB" id="29650at2"/>
<dbReference type="Proteomes" id="UP000008871">
    <property type="component" value="Chromosome"/>
</dbReference>
<dbReference type="GO" id="GO:0005737">
    <property type="term" value="C:cytoplasm"/>
    <property type="evidence" value="ECO:0007669"/>
    <property type="project" value="UniProtKB-SubCell"/>
</dbReference>
<dbReference type="GO" id="GO:0052914">
    <property type="term" value="F:16S rRNA (guanine(1207)-N(2))-methyltransferase activity"/>
    <property type="evidence" value="ECO:0007669"/>
    <property type="project" value="UniProtKB-EC"/>
</dbReference>
<dbReference type="GO" id="GO:0003676">
    <property type="term" value="F:nucleic acid binding"/>
    <property type="evidence" value="ECO:0007669"/>
    <property type="project" value="InterPro"/>
</dbReference>
<dbReference type="CDD" id="cd02440">
    <property type="entry name" value="AdoMet_MTases"/>
    <property type="match status" value="1"/>
</dbReference>
<dbReference type="Gene3D" id="3.40.50.150">
    <property type="entry name" value="Vaccinia Virus protein VP39"/>
    <property type="match status" value="2"/>
</dbReference>
<dbReference type="HAMAP" id="MF_01862">
    <property type="entry name" value="16SrRNA_methyltr_C"/>
    <property type="match status" value="1"/>
</dbReference>
<dbReference type="InterPro" id="IPR002052">
    <property type="entry name" value="DNA_methylase_N6_adenine_CS"/>
</dbReference>
<dbReference type="InterPro" id="IPR013675">
    <property type="entry name" value="Mtase_sm_N"/>
</dbReference>
<dbReference type="InterPro" id="IPR023543">
    <property type="entry name" value="rRNA_ssu_MeTfrase_C"/>
</dbReference>
<dbReference type="InterPro" id="IPR046977">
    <property type="entry name" value="RsmC/RlmG"/>
</dbReference>
<dbReference type="InterPro" id="IPR029063">
    <property type="entry name" value="SAM-dependent_MTases_sf"/>
</dbReference>
<dbReference type="InterPro" id="IPR007848">
    <property type="entry name" value="Small_mtfrase_dom"/>
</dbReference>
<dbReference type="PANTHER" id="PTHR47816">
    <property type="entry name" value="RIBOSOMAL RNA SMALL SUBUNIT METHYLTRANSFERASE C"/>
    <property type="match status" value="1"/>
</dbReference>
<dbReference type="PANTHER" id="PTHR47816:SF4">
    <property type="entry name" value="RIBOSOMAL RNA SMALL SUBUNIT METHYLTRANSFERASE C"/>
    <property type="match status" value="1"/>
</dbReference>
<dbReference type="Pfam" id="PF05175">
    <property type="entry name" value="MTS"/>
    <property type="match status" value="1"/>
</dbReference>
<dbReference type="Pfam" id="PF08468">
    <property type="entry name" value="MTS_N"/>
    <property type="match status" value="1"/>
</dbReference>
<dbReference type="SUPFAM" id="SSF53335">
    <property type="entry name" value="S-adenosyl-L-methionine-dependent methyltransferases"/>
    <property type="match status" value="1"/>
</dbReference>
<sequence length="325" mass="35300">MENTTQLLLRQSDALAGRNVLVVDANDPALKTLSVDATVHVHADDYTIGAQQWAPAPTVPAGTDLLVLPLSKSLDRLRFLLNWLAGEIAEPTELWLIGPTKGGIRGALKYLEAHVDGTMLEDSARHCKLYSGLLQPGEKQSLNAWGTVLEVADQEAVSYPGVFSHGRLDEGSALLLQAMEGHNLGKPGKVIDMGCGAGVISVWLARHGWQVQGVDVSASAVTASTESLARNGLQGRIMGGDLFSPIQGRVDMVVTNPPFHDRRQRTTDITRRLIAEAPTYLKPGGVLWLVANRELPYVQWLDDAFSHVQVASETTRFRVYRAVLS</sequence>
<evidence type="ECO:0000255" key="1">
    <source>
        <dbReference type="HAMAP-Rule" id="MF_01862"/>
    </source>
</evidence>
<comment type="function">
    <text evidence="1">Specifically methylates the guanine in position 1207 of 16S rRNA in the 30S particle.</text>
</comment>
<comment type="catalytic activity">
    <reaction evidence="1">
        <text>guanosine(1207) in 16S rRNA + S-adenosyl-L-methionine = N(2)-methylguanosine(1207) in 16S rRNA + S-adenosyl-L-homocysteine + H(+)</text>
        <dbReference type="Rhea" id="RHEA:42736"/>
        <dbReference type="Rhea" id="RHEA-COMP:10213"/>
        <dbReference type="Rhea" id="RHEA-COMP:10214"/>
        <dbReference type="ChEBI" id="CHEBI:15378"/>
        <dbReference type="ChEBI" id="CHEBI:57856"/>
        <dbReference type="ChEBI" id="CHEBI:59789"/>
        <dbReference type="ChEBI" id="CHEBI:74269"/>
        <dbReference type="ChEBI" id="CHEBI:74481"/>
        <dbReference type="EC" id="2.1.1.172"/>
    </reaction>
</comment>
<comment type="subunit">
    <text evidence="1">Monomer.</text>
</comment>
<comment type="subcellular location">
    <subcellularLocation>
        <location evidence="1">Cytoplasm</location>
    </subcellularLocation>
</comment>
<comment type="similarity">
    <text evidence="1">Belongs to the methyltransferase superfamily. RsmC family.</text>
</comment>
<accession>Q0VP64</accession>
<protein>
    <recommendedName>
        <fullName evidence="1">Ribosomal RNA small subunit methyltransferase C</fullName>
        <ecNumber evidence="1">2.1.1.172</ecNumber>
    </recommendedName>
    <alternativeName>
        <fullName evidence="1">16S rRNA m2G1207 methyltransferase</fullName>
    </alternativeName>
    <alternativeName>
        <fullName evidence="1">rRNA (guanine-N(2)-)-methyltransferase RsmC</fullName>
    </alternativeName>
</protein>
<reference key="1">
    <citation type="journal article" date="2006" name="Nat. Biotechnol.">
        <title>Genome sequence of the ubiquitous hydrocarbon-degrading marine bacterium Alcanivorax borkumensis.</title>
        <authorList>
            <person name="Schneiker S."/>
            <person name="Martins dos Santos V.A.P."/>
            <person name="Bartels D."/>
            <person name="Bekel T."/>
            <person name="Brecht M."/>
            <person name="Buhrmester J."/>
            <person name="Chernikova T.N."/>
            <person name="Denaro R."/>
            <person name="Ferrer M."/>
            <person name="Gertler C."/>
            <person name="Goesmann A."/>
            <person name="Golyshina O.V."/>
            <person name="Kaminski F."/>
            <person name="Khachane A.N."/>
            <person name="Lang S."/>
            <person name="Linke B."/>
            <person name="McHardy A.C."/>
            <person name="Meyer F."/>
            <person name="Nechitaylo T."/>
            <person name="Puehler A."/>
            <person name="Regenhardt D."/>
            <person name="Rupp O."/>
            <person name="Sabirova J.S."/>
            <person name="Selbitschka W."/>
            <person name="Yakimov M.M."/>
            <person name="Timmis K.N."/>
            <person name="Vorhoelter F.-J."/>
            <person name="Weidner S."/>
            <person name="Kaiser O."/>
            <person name="Golyshin P.N."/>
        </authorList>
    </citation>
    <scope>NUCLEOTIDE SEQUENCE [LARGE SCALE GENOMIC DNA]</scope>
    <source>
        <strain>ATCC 700651 / DSM 11573 / NCIMB 13689 / SK2</strain>
    </source>
</reference>
<gene>
    <name evidence="1" type="primary">rsmC</name>
    <name type="ordered locus">ABO_1586</name>
</gene>
<keyword id="KW-0963">Cytoplasm</keyword>
<keyword id="KW-0489">Methyltransferase</keyword>
<keyword id="KW-1185">Reference proteome</keyword>
<keyword id="KW-0698">rRNA processing</keyword>
<keyword id="KW-0949">S-adenosyl-L-methionine</keyword>
<keyword id="KW-0808">Transferase</keyword>
<name>RSMC_ALCBS</name>
<feature type="chain" id="PRO_0000369687" description="Ribosomal RNA small subunit methyltransferase C">
    <location>
        <begin position="1"/>
        <end position="325"/>
    </location>
</feature>
<organism>
    <name type="scientific">Alcanivorax borkumensis (strain ATCC 700651 / DSM 11573 / NCIMB 13689 / SK2)</name>
    <dbReference type="NCBI Taxonomy" id="393595"/>
    <lineage>
        <taxon>Bacteria</taxon>
        <taxon>Pseudomonadati</taxon>
        <taxon>Pseudomonadota</taxon>
        <taxon>Gammaproteobacteria</taxon>
        <taxon>Oceanospirillales</taxon>
        <taxon>Alcanivoracaceae</taxon>
        <taxon>Alcanivorax</taxon>
    </lineage>
</organism>
<proteinExistence type="inferred from homology"/>